<protein>
    <recommendedName>
        <fullName evidence="4">Proton-translocating ferredoxin:NAD(+) oxidoreductase complex subunit B</fullName>
        <ecNumber evidence="1 3">7.1.1.-</ecNumber>
    </recommendedName>
    <alternativeName>
        <fullName evidence="1 4">Rnf electron transport complex subunit B</fullName>
    </alternativeName>
</protein>
<organism>
    <name type="scientific">Clostridium ljungdahlii (strain ATCC 55383 / DSM 13528 / PETC)</name>
    <dbReference type="NCBI Taxonomy" id="748727"/>
    <lineage>
        <taxon>Bacteria</taxon>
        <taxon>Bacillati</taxon>
        <taxon>Bacillota</taxon>
        <taxon>Clostridia</taxon>
        <taxon>Eubacteriales</taxon>
        <taxon>Clostridiaceae</taxon>
        <taxon>Clostridium</taxon>
    </lineage>
</organism>
<feature type="chain" id="PRO_0000443518" description="Proton-translocating ferredoxin:NAD(+) oxidoreductase complex subunit B">
    <location>
        <begin position="1"/>
        <end position="284"/>
    </location>
</feature>
<feature type="domain" description="4Fe-4S" evidence="1">
    <location>
        <begin position="32"/>
        <end position="92"/>
    </location>
</feature>
<feature type="domain" description="4Fe-4S ferredoxin-type 1" evidence="1">
    <location>
        <begin position="133"/>
        <end position="162"/>
    </location>
</feature>
<feature type="domain" description="4Fe-4S ferredoxin-type 2" evidence="1">
    <location>
        <begin position="163"/>
        <end position="192"/>
    </location>
</feature>
<feature type="domain" description="4Fe-4S ferredoxin-type 3" evidence="1">
    <location>
        <begin position="206"/>
        <end position="237"/>
    </location>
</feature>
<feature type="domain" description="4Fe-4S ferredoxin-type 4" evidence="1">
    <location>
        <begin position="239"/>
        <end position="269"/>
    </location>
</feature>
<feature type="region of interest" description="Hydrophobic" evidence="1">
    <location>
        <begin position="1"/>
        <end position="26"/>
    </location>
</feature>
<feature type="binding site" evidence="1">
    <location>
        <position position="49"/>
    </location>
    <ligand>
        <name>[4Fe-4S] cluster</name>
        <dbReference type="ChEBI" id="CHEBI:49883"/>
        <label>1</label>
    </ligand>
</feature>
<feature type="binding site" evidence="1">
    <location>
        <position position="52"/>
    </location>
    <ligand>
        <name>[4Fe-4S] cluster</name>
        <dbReference type="ChEBI" id="CHEBI:49883"/>
        <label>1</label>
    </ligand>
</feature>
<feature type="binding site" evidence="1">
    <location>
        <position position="57"/>
    </location>
    <ligand>
        <name>[4Fe-4S] cluster</name>
        <dbReference type="ChEBI" id="CHEBI:49883"/>
        <label>1</label>
    </ligand>
</feature>
<feature type="binding site" evidence="1">
    <location>
        <position position="75"/>
    </location>
    <ligand>
        <name>[4Fe-4S] cluster</name>
        <dbReference type="ChEBI" id="CHEBI:49883"/>
        <label>1</label>
    </ligand>
</feature>
<feature type="binding site" evidence="1">
    <location>
        <position position="138"/>
    </location>
    <ligand>
        <name>[4Fe-4S] cluster</name>
        <dbReference type="ChEBI" id="CHEBI:49883"/>
        <label>2</label>
    </ligand>
</feature>
<feature type="binding site" evidence="1">
    <location>
        <position position="142"/>
    </location>
    <ligand>
        <name>[4Fe-4S] cluster</name>
        <dbReference type="ChEBI" id="CHEBI:49883"/>
        <label>2</label>
    </ligand>
</feature>
<feature type="binding site" evidence="1">
    <location>
        <position position="148"/>
    </location>
    <ligand>
        <name>[4Fe-4S] cluster</name>
        <dbReference type="ChEBI" id="CHEBI:49883"/>
        <label>2</label>
    </ligand>
</feature>
<feature type="binding site" evidence="1">
    <location>
        <position position="152"/>
    </location>
    <ligand>
        <name>[4Fe-4S] cluster</name>
        <dbReference type="ChEBI" id="CHEBI:49883"/>
        <label>3</label>
    </ligand>
</feature>
<feature type="binding site" evidence="1">
    <location>
        <position position="172"/>
    </location>
    <ligand>
        <name>[4Fe-4S] cluster</name>
        <dbReference type="ChEBI" id="CHEBI:49883"/>
        <label>3</label>
    </ligand>
</feature>
<feature type="binding site" evidence="1">
    <location>
        <position position="175"/>
    </location>
    <ligand>
        <name>[4Fe-4S] cluster</name>
        <dbReference type="ChEBI" id="CHEBI:49883"/>
        <label>3</label>
    </ligand>
</feature>
<feature type="binding site" evidence="1">
    <location>
        <position position="178"/>
    </location>
    <ligand>
        <name>[4Fe-4S] cluster</name>
        <dbReference type="ChEBI" id="CHEBI:49883"/>
        <label>3</label>
    </ligand>
</feature>
<feature type="binding site" evidence="1">
    <location>
        <position position="182"/>
    </location>
    <ligand>
        <name>[4Fe-4S] cluster</name>
        <dbReference type="ChEBI" id="CHEBI:49883"/>
        <label>2</label>
    </ligand>
</feature>
<feature type="binding site" evidence="1">
    <location>
        <position position="217"/>
    </location>
    <ligand>
        <name>[4Fe-4S] cluster</name>
        <dbReference type="ChEBI" id="CHEBI:49883"/>
        <label>4</label>
    </ligand>
</feature>
<feature type="binding site" evidence="1">
    <location>
        <position position="220"/>
    </location>
    <ligand>
        <name>[4Fe-4S] cluster</name>
        <dbReference type="ChEBI" id="CHEBI:49883"/>
        <label>4</label>
    </ligand>
</feature>
<feature type="binding site" evidence="1">
    <location>
        <position position="223"/>
    </location>
    <ligand>
        <name>[4Fe-4S] cluster</name>
        <dbReference type="ChEBI" id="CHEBI:49883"/>
        <label>4</label>
    </ligand>
</feature>
<feature type="binding site" evidence="1">
    <location>
        <position position="227"/>
    </location>
    <ligand>
        <name>[4Fe-4S] cluster</name>
        <dbReference type="ChEBI" id="CHEBI:49883"/>
        <label>4</label>
    </ligand>
</feature>
<feature type="binding site" evidence="2">
    <location>
        <position position="246"/>
    </location>
    <ligand>
        <name>[4Fe-4S] cluster</name>
        <dbReference type="ChEBI" id="CHEBI:49883"/>
        <label>5</label>
    </ligand>
</feature>
<feature type="binding site" evidence="2">
    <location>
        <position position="249"/>
    </location>
    <ligand>
        <name>[4Fe-4S] cluster</name>
        <dbReference type="ChEBI" id="CHEBI:49883"/>
        <label>5</label>
    </ligand>
</feature>
<feature type="binding site" evidence="2">
    <location>
        <position position="254"/>
    </location>
    <ligand>
        <name>[4Fe-4S] cluster</name>
        <dbReference type="ChEBI" id="CHEBI:49883"/>
        <label>5</label>
    </ligand>
</feature>
<feature type="binding site" evidence="2">
    <location>
        <position position="258"/>
    </location>
    <ligand>
        <name>[4Fe-4S] cluster</name>
        <dbReference type="ChEBI" id="CHEBI:49883"/>
        <label>5</label>
    </ligand>
</feature>
<comment type="function">
    <text evidence="3">Part of a membrane-bound complex that couples electron transfer with translocation of ions across the membrane. Couples electron transfer from reduced ferredoxin to NAD(+) with translocation of H(+) out of the cell. Essential for energy conservation during autotrophic growth. Contributes to ATP synthesis during heterotrophic growth.</text>
</comment>
<comment type="cofactor">
    <cofactor evidence="1">
        <name>[4Fe-4S] cluster</name>
        <dbReference type="ChEBI" id="CHEBI:49883"/>
    </cofactor>
    <text evidence="4">Binds 5 [4Fe-4S] clusters.</text>
</comment>
<comment type="subunit">
    <text evidence="1">The complex is composed of six subunits: RnfA, RnfB, RnfC, RnfD, RnfE and RnfG.</text>
</comment>
<comment type="subcellular location">
    <subcellularLocation>
        <location evidence="1">Cell membrane</location>
    </subcellularLocation>
</comment>
<comment type="similarity">
    <text evidence="1">Belongs to the 4Fe4S bacterial-type ferredoxin family. RnfB subfamily.</text>
</comment>
<dbReference type="EC" id="7.1.1.-" evidence="1 3"/>
<dbReference type="EMBL" id="CP001666">
    <property type="protein sequence ID" value="ADK14209.1"/>
    <property type="molecule type" value="Genomic_DNA"/>
</dbReference>
<dbReference type="RefSeq" id="WP_013237806.1">
    <property type="nucleotide sequence ID" value="NZ_LITS01000015.1"/>
</dbReference>
<dbReference type="SMR" id="D8GR71"/>
<dbReference type="STRING" id="748727.CLJU_c11410"/>
<dbReference type="KEGG" id="clj:CLJU_c11410"/>
<dbReference type="PATRIC" id="fig|748727.19.peg.4231"/>
<dbReference type="eggNOG" id="COG1148">
    <property type="taxonomic scope" value="Bacteria"/>
</dbReference>
<dbReference type="eggNOG" id="COG2878">
    <property type="taxonomic scope" value="Bacteria"/>
</dbReference>
<dbReference type="HOGENOM" id="CLU_053470_0_0_9"/>
<dbReference type="OrthoDB" id="9789936at2"/>
<dbReference type="BRENDA" id="7.1.1.11">
    <property type="organism ID" value="12866"/>
</dbReference>
<dbReference type="Proteomes" id="UP000001656">
    <property type="component" value="Chromosome"/>
</dbReference>
<dbReference type="GO" id="GO:0005886">
    <property type="term" value="C:plasma membrane"/>
    <property type="evidence" value="ECO:0007669"/>
    <property type="project" value="UniProtKB-SubCell"/>
</dbReference>
<dbReference type="GO" id="GO:0051539">
    <property type="term" value="F:4 iron, 4 sulfur cluster binding"/>
    <property type="evidence" value="ECO:0007669"/>
    <property type="project" value="UniProtKB-UniRule"/>
</dbReference>
<dbReference type="GO" id="GO:0009055">
    <property type="term" value="F:electron transfer activity"/>
    <property type="evidence" value="ECO:0007669"/>
    <property type="project" value="InterPro"/>
</dbReference>
<dbReference type="GO" id="GO:0046872">
    <property type="term" value="F:metal ion binding"/>
    <property type="evidence" value="ECO:0007669"/>
    <property type="project" value="UniProtKB-KW"/>
</dbReference>
<dbReference type="GO" id="GO:0022900">
    <property type="term" value="P:electron transport chain"/>
    <property type="evidence" value="ECO:0007669"/>
    <property type="project" value="UniProtKB-UniRule"/>
</dbReference>
<dbReference type="CDD" id="cd10549">
    <property type="entry name" value="MtMvhB_like"/>
    <property type="match status" value="1"/>
</dbReference>
<dbReference type="Gene3D" id="3.30.70.20">
    <property type="match status" value="2"/>
</dbReference>
<dbReference type="Gene3D" id="1.10.15.40">
    <property type="entry name" value="Electron transport complex subunit B, putative Fe-S cluster"/>
    <property type="match status" value="1"/>
</dbReference>
<dbReference type="HAMAP" id="MF_00463">
    <property type="entry name" value="RsxB_RnfB"/>
    <property type="match status" value="1"/>
</dbReference>
<dbReference type="InterPro" id="IPR007202">
    <property type="entry name" value="4Fe-4S_dom"/>
</dbReference>
<dbReference type="InterPro" id="IPR017896">
    <property type="entry name" value="4Fe4S_Fe-S-bd"/>
</dbReference>
<dbReference type="InterPro" id="IPR017900">
    <property type="entry name" value="4Fe4S_Fe_S_CS"/>
</dbReference>
<dbReference type="InterPro" id="IPR050395">
    <property type="entry name" value="4Fe4S_Ferredoxin_RnfB"/>
</dbReference>
<dbReference type="InterPro" id="IPR010207">
    <property type="entry name" value="Elect_transpt_cplx_RnfB/RsxB"/>
</dbReference>
<dbReference type="NCBIfam" id="NF005503">
    <property type="entry name" value="PRK07118.1-2"/>
    <property type="match status" value="1"/>
</dbReference>
<dbReference type="NCBIfam" id="TIGR01944">
    <property type="entry name" value="rnfB"/>
    <property type="match status" value="1"/>
</dbReference>
<dbReference type="PANTHER" id="PTHR43560">
    <property type="entry name" value="ION-TRANSLOCATING OXIDOREDUCTASE COMPLEX SUBUNIT B"/>
    <property type="match status" value="1"/>
</dbReference>
<dbReference type="PANTHER" id="PTHR43560:SF1">
    <property type="entry name" value="ION-TRANSLOCATING OXIDOREDUCTASE COMPLEX SUBUNIT B"/>
    <property type="match status" value="1"/>
</dbReference>
<dbReference type="Pfam" id="PF12838">
    <property type="entry name" value="Fer4_7"/>
    <property type="match status" value="1"/>
</dbReference>
<dbReference type="Pfam" id="PF04060">
    <property type="entry name" value="FeS"/>
    <property type="match status" value="1"/>
</dbReference>
<dbReference type="SUPFAM" id="SSF54862">
    <property type="entry name" value="4Fe-4S ferredoxins"/>
    <property type="match status" value="1"/>
</dbReference>
<dbReference type="PROSITE" id="PS51656">
    <property type="entry name" value="4FE4S"/>
    <property type="match status" value="1"/>
</dbReference>
<dbReference type="PROSITE" id="PS00198">
    <property type="entry name" value="4FE4S_FER_1"/>
    <property type="match status" value="2"/>
</dbReference>
<dbReference type="PROSITE" id="PS51379">
    <property type="entry name" value="4FE4S_FER_2"/>
    <property type="match status" value="4"/>
</dbReference>
<proteinExistence type="inferred from homology"/>
<evidence type="ECO:0000255" key="1">
    <source>
        <dbReference type="HAMAP-Rule" id="MF_00463"/>
    </source>
</evidence>
<evidence type="ECO:0000255" key="2">
    <source>
        <dbReference type="PROSITE-ProRule" id="PRU00711"/>
    </source>
</evidence>
<evidence type="ECO:0000269" key="3">
    <source>
    </source>
</evidence>
<evidence type="ECO:0000305" key="4"/>
<evidence type="ECO:0000312" key="5">
    <source>
        <dbReference type="EMBL" id="ADK14209.1"/>
    </source>
</evidence>
<reference key="1">
    <citation type="journal article" date="2010" name="Proc. Natl. Acad. Sci. U.S.A.">
        <title>Clostridium ljungdahlii represents a microbial production platform based on syngas.</title>
        <authorList>
            <person name="Kopke M."/>
            <person name="Held C."/>
            <person name="Hujer S."/>
            <person name="Liesegang H."/>
            <person name="Wiezer A."/>
            <person name="Wollherr A."/>
            <person name="Ehrenreich A."/>
            <person name="Liebl W."/>
            <person name="Gottschalk G."/>
            <person name="Durre P."/>
        </authorList>
    </citation>
    <scope>NUCLEOTIDE SEQUENCE [LARGE SCALE GENOMIC DNA]</scope>
    <source>
        <strain>ATCC 55383 / DSM 13528 / PETC</strain>
    </source>
</reference>
<reference key="2">
    <citation type="journal article" date="2012" name="MBio">
        <title>The Rnf complex of Clostridium ljungdahlii is a proton-translocating ferredoxin:NAD+ oxidoreductase essential for autotrophic growth.</title>
        <authorList>
            <person name="Tremblay P.L."/>
            <person name="Zhang T."/>
            <person name="Dar S.A."/>
            <person name="Leang C."/>
            <person name="Lovley D.R."/>
        </authorList>
    </citation>
    <scope>FUNCTION</scope>
    <source>
        <strain>ATCC 55383 / DSM 13528 / PETC</strain>
    </source>
</reference>
<name>RNFB_CLOLD</name>
<keyword id="KW-0004">4Fe-4S</keyword>
<keyword id="KW-1003">Cell membrane</keyword>
<keyword id="KW-0249">Electron transport</keyword>
<keyword id="KW-0408">Iron</keyword>
<keyword id="KW-0411">Iron-sulfur</keyword>
<keyword id="KW-0472">Membrane</keyword>
<keyword id="KW-0479">Metal-binding</keyword>
<keyword id="KW-0520">NAD</keyword>
<keyword id="KW-0677">Repeat</keyword>
<keyword id="KW-1278">Translocase</keyword>
<keyword id="KW-0813">Transport</keyword>
<gene>
    <name evidence="1 5" type="primary">rnfB</name>
    <name evidence="5" type="ordered locus">CLJU_c11410</name>
</gene>
<sequence>MNTVIMILVVMTIIGLIFGLVLAYVNKRFAMEVNPLVDLVEDVLPKGQCGGCGFAGCKAYAEAVVLDESVPPNLCVPGKAAVAEQVAKLTGKSAPPIEPRVAHVRCGGDCTKAVKNFEYEGIHDCVAANLLEGGPKACKYGCLGFGTCVKSCPFGAMAMGSNGLPIIDTDICTGCGTCVSACPKQVLGFRPVGSKVMVNCNSKNKGGAVRKACSVGCLGCGLCAKNCPNDAIKVENNLAVVDQSICASCSEATCLAKCPTGAIKAIVSGTDLQQQSKNEAAANS</sequence>
<accession>D8GR71</accession>